<keyword id="KW-0249">Electron transport</keyword>
<keyword id="KW-0472">Membrane</keyword>
<keyword id="KW-0496">Mitochondrion</keyword>
<keyword id="KW-0999">Mitochondrion inner membrane</keyword>
<keyword id="KW-0520">NAD</keyword>
<keyword id="KW-1185">Reference proteome</keyword>
<keyword id="KW-0679">Respiratory chain</keyword>
<keyword id="KW-1278">Translocase</keyword>
<keyword id="KW-0812">Transmembrane</keyword>
<keyword id="KW-1133">Transmembrane helix</keyword>
<keyword id="KW-0813">Transport</keyword>
<keyword id="KW-0830">Ubiquinone</keyword>
<feature type="chain" id="PRO_0000253520" description="NADH-ubiquinone oxidoreductase chain 4">
    <location>
        <begin position="1"/>
        <end position="459"/>
    </location>
</feature>
<feature type="transmembrane region" description="Helical" evidence="3">
    <location>
        <begin position="22"/>
        <end position="42"/>
    </location>
</feature>
<feature type="transmembrane region" description="Helical" evidence="3">
    <location>
        <begin position="60"/>
        <end position="80"/>
    </location>
</feature>
<feature type="transmembrane region" description="Helical" evidence="3">
    <location>
        <begin position="94"/>
        <end position="112"/>
    </location>
</feature>
<feature type="transmembrane region" description="Helical" evidence="3">
    <location>
        <begin position="116"/>
        <end position="138"/>
    </location>
</feature>
<feature type="transmembrane region" description="Helical" evidence="3">
    <location>
        <begin position="147"/>
        <end position="167"/>
    </location>
</feature>
<feature type="transmembrane region" description="Helical" evidence="3">
    <location>
        <begin position="196"/>
        <end position="216"/>
    </location>
</feature>
<feature type="transmembrane region" description="Helical" evidence="3">
    <location>
        <begin position="224"/>
        <end position="244"/>
    </location>
</feature>
<feature type="transmembrane region" description="Helical" evidence="3">
    <location>
        <begin position="256"/>
        <end position="276"/>
    </location>
</feature>
<feature type="transmembrane region" description="Helical" evidence="3">
    <location>
        <begin position="284"/>
        <end position="303"/>
    </location>
</feature>
<feature type="transmembrane region" description="Helical" evidence="3">
    <location>
        <begin position="308"/>
        <end position="330"/>
    </location>
</feature>
<feature type="transmembrane region" description="Helical" evidence="3">
    <location>
        <begin position="351"/>
        <end position="371"/>
    </location>
</feature>
<feature type="transmembrane region" description="Helical" evidence="3">
    <location>
        <begin position="393"/>
        <end position="413"/>
    </location>
</feature>
<feature type="transmembrane region" description="Helical" evidence="3">
    <location>
        <begin position="435"/>
        <end position="455"/>
    </location>
</feature>
<sequence length="459" mass="52058">MLKYIIPTIMLMPLTWLSKNSMIWVNSTAHSLLISFTSLLLMNQFGDNSLNFSLVFFSDSLSTPLLILTMWLLPLMLMASQHHLSKENLTRKKLFITMLISLQLFLIMTFTAMELILFYILFEATLVPTLIIITRWGNQTERLNAGLYFLFYTLAGSLPLLVALIYIQNTVGSLNFLMLQYWVQPVHNSWSNVFMWLACMMAFMVKMPLYGLHLWLPKAHVEAPIAGSMVLAAVLLKLGGYGMLRITLILNPMTDFMAYPFIMLSLWGMIMTSSICLRQTDLKSLIAYSSVSHMALVIVAILIQTPWSYMGATALMIAHGLTSSMLFCLANSNYERIHSRTMILARGLQTLLPLMATWWLLASLTNLALPPTINLIGELFVVMSTFSWSNITIILMGVNMVITALYSLYMLIMTQRGKYTYHINNISPSFTRENALMSLHILPLLLLTLNPKIILGPLY</sequence>
<gene>
    <name type="primary">MT-ND4</name>
    <name type="synonym">MTND4</name>
    <name type="synonym">NADH4</name>
    <name type="synonym">ND4</name>
</gene>
<protein>
    <recommendedName>
        <fullName>NADH-ubiquinone oxidoreductase chain 4</fullName>
        <ecNumber evidence="1">7.1.1.2</ecNumber>
    </recommendedName>
    <alternativeName>
        <fullName>NADH dehydrogenase subunit 4</fullName>
    </alternativeName>
</protein>
<comment type="function">
    <text evidence="1">Core subunit of the mitochondrial membrane respiratory chain NADH dehydrogenase (Complex I) which catalyzes electron transfer from NADH through the respiratory chain, using ubiquinone as an electron acceptor. Essential for the catalytic activity and assembly of complex I.</text>
</comment>
<comment type="catalytic activity">
    <reaction evidence="1">
        <text>a ubiquinone + NADH + 5 H(+)(in) = a ubiquinol + NAD(+) + 4 H(+)(out)</text>
        <dbReference type="Rhea" id="RHEA:29091"/>
        <dbReference type="Rhea" id="RHEA-COMP:9565"/>
        <dbReference type="Rhea" id="RHEA-COMP:9566"/>
        <dbReference type="ChEBI" id="CHEBI:15378"/>
        <dbReference type="ChEBI" id="CHEBI:16389"/>
        <dbReference type="ChEBI" id="CHEBI:17976"/>
        <dbReference type="ChEBI" id="CHEBI:57540"/>
        <dbReference type="ChEBI" id="CHEBI:57945"/>
        <dbReference type="EC" id="7.1.1.2"/>
    </reaction>
</comment>
<comment type="subunit">
    <text evidence="2">Core subunit of respiratory chain NADH dehydrogenase (Complex I) which is composed of 45 different subunits.</text>
</comment>
<comment type="subcellular location">
    <subcellularLocation>
        <location evidence="2">Mitochondrion inner membrane</location>
        <topology evidence="3">Multi-pass membrane protein</topology>
    </subcellularLocation>
</comment>
<comment type="similarity">
    <text evidence="4">Belongs to the complex I subunit 4 family.</text>
</comment>
<organism>
    <name type="scientific">Bos indicus</name>
    <name type="common">Zebu</name>
    <dbReference type="NCBI Taxonomy" id="9915"/>
    <lineage>
        <taxon>Eukaryota</taxon>
        <taxon>Metazoa</taxon>
        <taxon>Chordata</taxon>
        <taxon>Craniata</taxon>
        <taxon>Vertebrata</taxon>
        <taxon>Euteleostomi</taxon>
        <taxon>Mammalia</taxon>
        <taxon>Eutheria</taxon>
        <taxon>Laurasiatheria</taxon>
        <taxon>Artiodactyla</taxon>
        <taxon>Ruminantia</taxon>
        <taxon>Pecora</taxon>
        <taxon>Bovidae</taxon>
        <taxon>Bovinae</taxon>
        <taxon>Bos</taxon>
    </lineage>
</organism>
<geneLocation type="mitochondrion"/>
<name>NU4M_BOSIN</name>
<proteinExistence type="inferred from homology"/>
<dbReference type="EC" id="7.1.1.2" evidence="1"/>
<dbReference type="EMBL" id="AF492350">
    <property type="protein sequence ID" value="AAQ06589.1"/>
    <property type="molecule type" value="Genomic_DNA"/>
</dbReference>
<dbReference type="EMBL" id="AY126697">
    <property type="protein sequence ID" value="AAM95739.1"/>
    <property type="status" value="ALT_SEQ"/>
    <property type="molecule type" value="Genomic_DNA"/>
</dbReference>
<dbReference type="RefSeq" id="YP_052706.2">
    <property type="nucleotide sequence ID" value="NC_005971.1"/>
</dbReference>
<dbReference type="SMR" id="Q576B5"/>
<dbReference type="GeneID" id="2885973"/>
<dbReference type="KEGG" id="biu:2885973"/>
<dbReference type="CTD" id="4538"/>
<dbReference type="OrthoDB" id="14766at91561"/>
<dbReference type="Proteomes" id="UP000515132">
    <property type="component" value="Mitochondrion MT"/>
</dbReference>
<dbReference type="GO" id="GO:0005743">
    <property type="term" value="C:mitochondrial inner membrane"/>
    <property type="evidence" value="ECO:0000250"/>
    <property type="project" value="UniProtKB"/>
</dbReference>
<dbReference type="GO" id="GO:0008137">
    <property type="term" value="F:NADH dehydrogenase (ubiquinone) activity"/>
    <property type="evidence" value="ECO:0000250"/>
    <property type="project" value="UniProtKB"/>
</dbReference>
<dbReference type="GO" id="GO:0048039">
    <property type="term" value="F:ubiquinone binding"/>
    <property type="evidence" value="ECO:0007669"/>
    <property type="project" value="TreeGrafter"/>
</dbReference>
<dbReference type="GO" id="GO:0015990">
    <property type="term" value="P:electron transport coupled proton transport"/>
    <property type="evidence" value="ECO:0007669"/>
    <property type="project" value="TreeGrafter"/>
</dbReference>
<dbReference type="GO" id="GO:0006120">
    <property type="term" value="P:mitochondrial electron transport, NADH to ubiquinone"/>
    <property type="evidence" value="ECO:0000250"/>
    <property type="project" value="UniProtKB"/>
</dbReference>
<dbReference type="GO" id="GO:0032981">
    <property type="term" value="P:mitochondrial respiratory chain complex I assembly"/>
    <property type="evidence" value="ECO:0000250"/>
    <property type="project" value="UniProtKB"/>
</dbReference>
<dbReference type="InterPro" id="IPR000260">
    <property type="entry name" value="NADH4_N"/>
</dbReference>
<dbReference type="InterPro" id="IPR010227">
    <property type="entry name" value="NADH_Q_OxRdtase_chainM/4"/>
</dbReference>
<dbReference type="InterPro" id="IPR003918">
    <property type="entry name" value="NADH_UbQ_OxRdtase"/>
</dbReference>
<dbReference type="InterPro" id="IPR001750">
    <property type="entry name" value="ND/Mrp_TM"/>
</dbReference>
<dbReference type="NCBIfam" id="TIGR01972">
    <property type="entry name" value="NDH_I_M"/>
    <property type="match status" value="1"/>
</dbReference>
<dbReference type="PANTHER" id="PTHR43507">
    <property type="entry name" value="NADH-UBIQUINONE OXIDOREDUCTASE CHAIN 4"/>
    <property type="match status" value="1"/>
</dbReference>
<dbReference type="PANTHER" id="PTHR43507:SF20">
    <property type="entry name" value="NADH-UBIQUINONE OXIDOREDUCTASE CHAIN 4"/>
    <property type="match status" value="1"/>
</dbReference>
<dbReference type="Pfam" id="PF01059">
    <property type="entry name" value="Oxidored_q5_N"/>
    <property type="match status" value="1"/>
</dbReference>
<dbReference type="Pfam" id="PF00361">
    <property type="entry name" value="Proton_antipo_M"/>
    <property type="match status" value="1"/>
</dbReference>
<dbReference type="PRINTS" id="PR01437">
    <property type="entry name" value="NUOXDRDTASE4"/>
</dbReference>
<evidence type="ECO:0000250" key="1">
    <source>
        <dbReference type="UniProtKB" id="P03905"/>
    </source>
</evidence>
<evidence type="ECO:0000250" key="2">
    <source>
        <dbReference type="UniProtKB" id="P03910"/>
    </source>
</evidence>
<evidence type="ECO:0000255" key="3"/>
<evidence type="ECO:0000305" key="4"/>
<reference key="1">
    <citation type="submission" date="2002-03" db="EMBL/GenBank/DDBJ databases">
        <title>Complete sequence of the Bos indicus mitochondrial genome.</title>
        <authorList>
            <person name="Hiendleder S."/>
            <person name="Lewalski H."/>
            <person name="Wolf E."/>
        </authorList>
    </citation>
    <scope>NUCLEOTIDE SEQUENCE [GENOMIC DNA]</scope>
    <source>
        <tissue>Liver</tissue>
    </source>
</reference>
<reference key="2">
    <citation type="submission" date="2002-06" db="EMBL/GenBank/DDBJ databases">
        <title>The complete mitochondrial genome nucleotide sequence of Bos indicus.</title>
        <authorList>
            <person name="Miretti M.M."/>
            <person name="Pereira H.A. Jr."/>
            <person name="Greggio C."/>
            <person name="Suzuki J. Jr."/>
            <person name="Ferro J.A."/>
            <person name="Ferro M.I."/>
            <person name="Meirelles F."/>
            <person name="Garcia J.M."/>
            <person name="Smith L.C."/>
        </authorList>
    </citation>
    <scope>NUCLEOTIDE SEQUENCE [GENOMIC DNA]</scope>
</reference>
<accession>Q576B5</accession>
<accession>Q6EMS2</accession>